<protein>
    <recommendedName>
        <fullName evidence="1">Small ribosomal subunit protein uS3</fullName>
    </recommendedName>
    <alternativeName>
        <fullName evidence="2">30S ribosomal protein S3</fullName>
    </alternativeName>
</protein>
<accession>Q2IXQ4</accession>
<name>RS3_RHOP2</name>
<gene>
    <name evidence="1" type="primary">rpsC</name>
    <name type="ordered locus">RPB_2301</name>
</gene>
<evidence type="ECO:0000255" key="1">
    <source>
        <dbReference type="HAMAP-Rule" id="MF_01309"/>
    </source>
</evidence>
<evidence type="ECO:0000305" key="2"/>
<sequence>MGQKINPIGLRLGINRTWDSRWFAGKNEYGKLLHEDVKIREILHKELKQAAVARIVIERPHKKCRVTIHSARPGVVIGKKGADIDKLRKKVADITASDVVINIVEIRKPELDATLVAESIAQQLERRVAFRRAMKRAVQSAMRLGAEGIRINCSGRLGGAEIARMEWYREGRVPLHTLRADIDYGVATAFTTFGTCGVKVWIFKGEILEHDPMAQDKRMAEGDNSRPRRDAA</sequence>
<reference key="1">
    <citation type="submission" date="2006-01" db="EMBL/GenBank/DDBJ databases">
        <title>Complete sequence of Rhodopseudomonas palustris HaA2.</title>
        <authorList>
            <consortium name="US DOE Joint Genome Institute"/>
            <person name="Copeland A."/>
            <person name="Lucas S."/>
            <person name="Lapidus A."/>
            <person name="Barry K."/>
            <person name="Detter J.C."/>
            <person name="Glavina T."/>
            <person name="Hammon N."/>
            <person name="Israni S."/>
            <person name="Pitluck S."/>
            <person name="Chain P."/>
            <person name="Malfatti S."/>
            <person name="Shin M."/>
            <person name="Vergez L."/>
            <person name="Schmutz J."/>
            <person name="Larimer F."/>
            <person name="Land M."/>
            <person name="Hauser L."/>
            <person name="Pelletier D.A."/>
            <person name="Kyrpides N."/>
            <person name="Anderson I."/>
            <person name="Oda Y."/>
            <person name="Harwood C.S."/>
            <person name="Richardson P."/>
        </authorList>
    </citation>
    <scope>NUCLEOTIDE SEQUENCE [LARGE SCALE GENOMIC DNA]</scope>
    <source>
        <strain>HaA2</strain>
    </source>
</reference>
<organism>
    <name type="scientific">Rhodopseudomonas palustris (strain HaA2)</name>
    <dbReference type="NCBI Taxonomy" id="316058"/>
    <lineage>
        <taxon>Bacteria</taxon>
        <taxon>Pseudomonadati</taxon>
        <taxon>Pseudomonadota</taxon>
        <taxon>Alphaproteobacteria</taxon>
        <taxon>Hyphomicrobiales</taxon>
        <taxon>Nitrobacteraceae</taxon>
        <taxon>Rhodopseudomonas</taxon>
    </lineage>
</organism>
<keyword id="KW-1185">Reference proteome</keyword>
<keyword id="KW-0687">Ribonucleoprotein</keyword>
<keyword id="KW-0689">Ribosomal protein</keyword>
<keyword id="KW-0694">RNA-binding</keyword>
<keyword id="KW-0699">rRNA-binding</keyword>
<feature type="chain" id="PRO_0000293871" description="Small ribosomal subunit protein uS3">
    <location>
        <begin position="1"/>
        <end position="232"/>
    </location>
</feature>
<feature type="domain" description="KH type-2" evidence="1">
    <location>
        <begin position="39"/>
        <end position="107"/>
    </location>
</feature>
<comment type="function">
    <text evidence="1">Binds the lower part of the 30S subunit head. Binds mRNA in the 70S ribosome, positioning it for translation.</text>
</comment>
<comment type="subunit">
    <text evidence="1">Part of the 30S ribosomal subunit. Forms a tight complex with proteins S10 and S14.</text>
</comment>
<comment type="similarity">
    <text evidence="1">Belongs to the universal ribosomal protein uS3 family.</text>
</comment>
<dbReference type="EMBL" id="CP000250">
    <property type="protein sequence ID" value="ABD07006.1"/>
    <property type="molecule type" value="Genomic_DNA"/>
</dbReference>
<dbReference type="RefSeq" id="WP_011441191.1">
    <property type="nucleotide sequence ID" value="NC_007778.1"/>
</dbReference>
<dbReference type="SMR" id="Q2IXQ4"/>
<dbReference type="STRING" id="316058.RPB_2301"/>
<dbReference type="KEGG" id="rpb:RPB_2301"/>
<dbReference type="eggNOG" id="COG0092">
    <property type="taxonomic scope" value="Bacteria"/>
</dbReference>
<dbReference type="HOGENOM" id="CLU_058591_0_2_5"/>
<dbReference type="OrthoDB" id="9806396at2"/>
<dbReference type="Proteomes" id="UP000008809">
    <property type="component" value="Chromosome"/>
</dbReference>
<dbReference type="GO" id="GO:0022627">
    <property type="term" value="C:cytosolic small ribosomal subunit"/>
    <property type="evidence" value="ECO:0007669"/>
    <property type="project" value="TreeGrafter"/>
</dbReference>
<dbReference type="GO" id="GO:0003729">
    <property type="term" value="F:mRNA binding"/>
    <property type="evidence" value="ECO:0007669"/>
    <property type="project" value="UniProtKB-UniRule"/>
</dbReference>
<dbReference type="GO" id="GO:0019843">
    <property type="term" value="F:rRNA binding"/>
    <property type="evidence" value="ECO:0007669"/>
    <property type="project" value="UniProtKB-UniRule"/>
</dbReference>
<dbReference type="GO" id="GO:0003735">
    <property type="term" value="F:structural constituent of ribosome"/>
    <property type="evidence" value="ECO:0007669"/>
    <property type="project" value="InterPro"/>
</dbReference>
<dbReference type="GO" id="GO:0006412">
    <property type="term" value="P:translation"/>
    <property type="evidence" value="ECO:0007669"/>
    <property type="project" value="UniProtKB-UniRule"/>
</dbReference>
<dbReference type="CDD" id="cd02412">
    <property type="entry name" value="KH-II_30S_S3"/>
    <property type="match status" value="1"/>
</dbReference>
<dbReference type="FunFam" id="3.30.1140.32:FF:000009">
    <property type="entry name" value="30S ribosomal protein S3"/>
    <property type="match status" value="1"/>
</dbReference>
<dbReference type="FunFam" id="3.30.300.20:FF:000001">
    <property type="entry name" value="30S ribosomal protein S3"/>
    <property type="match status" value="1"/>
</dbReference>
<dbReference type="Gene3D" id="3.30.300.20">
    <property type="match status" value="1"/>
</dbReference>
<dbReference type="Gene3D" id="3.30.1140.32">
    <property type="entry name" value="Ribosomal protein S3, C-terminal domain"/>
    <property type="match status" value="1"/>
</dbReference>
<dbReference type="HAMAP" id="MF_01309_B">
    <property type="entry name" value="Ribosomal_uS3_B"/>
    <property type="match status" value="1"/>
</dbReference>
<dbReference type="InterPro" id="IPR004087">
    <property type="entry name" value="KH_dom"/>
</dbReference>
<dbReference type="InterPro" id="IPR015946">
    <property type="entry name" value="KH_dom-like_a/b"/>
</dbReference>
<dbReference type="InterPro" id="IPR004044">
    <property type="entry name" value="KH_dom_type_2"/>
</dbReference>
<dbReference type="InterPro" id="IPR009019">
    <property type="entry name" value="KH_sf_prok-type"/>
</dbReference>
<dbReference type="InterPro" id="IPR036419">
    <property type="entry name" value="Ribosomal_S3_C_sf"/>
</dbReference>
<dbReference type="InterPro" id="IPR005704">
    <property type="entry name" value="Ribosomal_uS3_bac-typ"/>
</dbReference>
<dbReference type="InterPro" id="IPR001351">
    <property type="entry name" value="Ribosomal_uS3_C"/>
</dbReference>
<dbReference type="InterPro" id="IPR018280">
    <property type="entry name" value="Ribosomal_uS3_CS"/>
</dbReference>
<dbReference type="NCBIfam" id="TIGR01009">
    <property type="entry name" value="rpsC_bact"/>
    <property type="match status" value="1"/>
</dbReference>
<dbReference type="PANTHER" id="PTHR11760">
    <property type="entry name" value="30S/40S RIBOSOMAL PROTEIN S3"/>
    <property type="match status" value="1"/>
</dbReference>
<dbReference type="PANTHER" id="PTHR11760:SF19">
    <property type="entry name" value="SMALL RIBOSOMAL SUBUNIT PROTEIN US3C"/>
    <property type="match status" value="1"/>
</dbReference>
<dbReference type="Pfam" id="PF07650">
    <property type="entry name" value="KH_2"/>
    <property type="match status" value="1"/>
</dbReference>
<dbReference type="Pfam" id="PF00189">
    <property type="entry name" value="Ribosomal_S3_C"/>
    <property type="match status" value="1"/>
</dbReference>
<dbReference type="SMART" id="SM00322">
    <property type="entry name" value="KH"/>
    <property type="match status" value="1"/>
</dbReference>
<dbReference type="SUPFAM" id="SSF54814">
    <property type="entry name" value="Prokaryotic type KH domain (KH-domain type II)"/>
    <property type="match status" value="1"/>
</dbReference>
<dbReference type="SUPFAM" id="SSF54821">
    <property type="entry name" value="Ribosomal protein S3 C-terminal domain"/>
    <property type="match status" value="1"/>
</dbReference>
<dbReference type="PROSITE" id="PS50823">
    <property type="entry name" value="KH_TYPE_2"/>
    <property type="match status" value="1"/>
</dbReference>
<dbReference type="PROSITE" id="PS00548">
    <property type="entry name" value="RIBOSOMAL_S3"/>
    <property type="match status" value="1"/>
</dbReference>
<proteinExistence type="inferred from homology"/>